<organism>
    <name type="scientific">Pelecanoides magellani</name>
    <name type="common">Magellanic diving petrel</name>
    <dbReference type="NCBI Taxonomy" id="79638"/>
    <lineage>
        <taxon>Eukaryota</taxon>
        <taxon>Metazoa</taxon>
        <taxon>Chordata</taxon>
        <taxon>Craniata</taxon>
        <taxon>Vertebrata</taxon>
        <taxon>Euteleostomi</taxon>
        <taxon>Archelosauria</taxon>
        <taxon>Archosauria</taxon>
        <taxon>Dinosauria</taxon>
        <taxon>Saurischia</taxon>
        <taxon>Theropoda</taxon>
        <taxon>Coelurosauria</taxon>
        <taxon>Aves</taxon>
        <taxon>Neognathae</taxon>
        <taxon>Neoaves</taxon>
        <taxon>Aequornithes</taxon>
        <taxon>Procellariiformes</taxon>
        <taxon>Procellariidae</taxon>
        <taxon>Pelecanoides</taxon>
    </lineage>
</organism>
<sequence>MAPNIRKSHPLLKMINNSLIDLPSPSNISAWWNFGSLLGICLMTQILTGLLLATHYTADTTLAFSSVAHTCRNVQYGWLIRNLHANGASFFFICIYLHIGRGFYYGSYLYKETWNTGVILLLTLMATAFVGYVLPWGQMSFWGATVITNLFSAIPYIGQTLVEWAWGGFSVDNPTLTRFFALHFLLPFMIAGLTTIHLTFLHESGSNNPLGITSNCDKIPFHPYFTLKDILGFTLMLLPLTILALFSPNLLGDPENFTPANPLITPPHIKPEWYFLFAYAILRSIPNKLGGVLALAASVLILFLTPFLHKAKQRTMTFRPISQLLFWILVTNLLILTWVGSQPVEHPFIIIGQLASITYFTILLILFPITGALENKMLNY</sequence>
<keyword id="KW-0249">Electron transport</keyword>
<keyword id="KW-0349">Heme</keyword>
<keyword id="KW-0408">Iron</keyword>
<keyword id="KW-0472">Membrane</keyword>
<keyword id="KW-0479">Metal-binding</keyword>
<keyword id="KW-0496">Mitochondrion</keyword>
<keyword id="KW-0999">Mitochondrion inner membrane</keyword>
<keyword id="KW-0679">Respiratory chain</keyword>
<keyword id="KW-0812">Transmembrane</keyword>
<keyword id="KW-1133">Transmembrane helix</keyword>
<keyword id="KW-0813">Transport</keyword>
<keyword id="KW-0830">Ubiquinone</keyword>
<dbReference type="EMBL" id="AF076075">
    <property type="protein sequence ID" value="AAC68632.1"/>
    <property type="molecule type" value="Genomic_DNA"/>
</dbReference>
<dbReference type="SMR" id="O79220"/>
<dbReference type="GO" id="GO:0005743">
    <property type="term" value="C:mitochondrial inner membrane"/>
    <property type="evidence" value="ECO:0007669"/>
    <property type="project" value="UniProtKB-SubCell"/>
</dbReference>
<dbReference type="GO" id="GO:0045275">
    <property type="term" value="C:respiratory chain complex III"/>
    <property type="evidence" value="ECO:0007669"/>
    <property type="project" value="InterPro"/>
</dbReference>
<dbReference type="GO" id="GO:0046872">
    <property type="term" value="F:metal ion binding"/>
    <property type="evidence" value="ECO:0007669"/>
    <property type="project" value="UniProtKB-KW"/>
</dbReference>
<dbReference type="GO" id="GO:0008121">
    <property type="term" value="F:ubiquinol-cytochrome-c reductase activity"/>
    <property type="evidence" value="ECO:0007669"/>
    <property type="project" value="InterPro"/>
</dbReference>
<dbReference type="GO" id="GO:0006122">
    <property type="term" value="P:mitochondrial electron transport, ubiquinol to cytochrome c"/>
    <property type="evidence" value="ECO:0007669"/>
    <property type="project" value="TreeGrafter"/>
</dbReference>
<dbReference type="CDD" id="cd00290">
    <property type="entry name" value="cytochrome_b_C"/>
    <property type="match status" value="1"/>
</dbReference>
<dbReference type="CDD" id="cd00284">
    <property type="entry name" value="Cytochrome_b_N"/>
    <property type="match status" value="1"/>
</dbReference>
<dbReference type="FunFam" id="1.20.810.10:FF:000002">
    <property type="entry name" value="Cytochrome b"/>
    <property type="match status" value="1"/>
</dbReference>
<dbReference type="Gene3D" id="1.20.810.10">
    <property type="entry name" value="Cytochrome Bc1 Complex, Chain C"/>
    <property type="match status" value="1"/>
</dbReference>
<dbReference type="InterPro" id="IPR005798">
    <property type="entry name" value="Cyt_b/b6_C"/>
</dbReference>
<dbReference type="InterPro" id="IPR036150">
    <property type="entry name" value="Cyt_b/b6_C_sf"/>
</dbReference>
<dbReference type="InterPro" id="IPR005797">
    <property type="entry name" value="Cyt_b/b6_N"/>
</dbReference>
<dbReference type="InterPro" id="IPR027387">
    <property type="entry name" value="Cytb/b6-like_sf"/>
</dbReference>
<dbReference type="InterPro" id="IPR030689">
    <property type="entry name" value="Cytochrome_b"/>
</dbReference>
<dbReference type="InterPro" id="IPR048260">
    <property type="entry name" value="Cytochrome_b_C_euk/bac"/>
</dbReference>
<dbReference type="InterPro" id="IPR048259">
    <property type="entry name" value="Cytochrome_b_N_euk/bac"/>
</dbReference>
<dbReference type="InterPro" id="IPR016174">
    <property type="entry name" value="Di-haem_cyt_TM"/>
</dbReference>
<dbReference type="PANTHER" id="PTHR19271">
    <property type="entry name" value="CYTOCHROME B"/>
    <property type="match status" value="1"/>
</dbReference>
<dbReference type="PANTHER" id="PTHR19271:SF16">
    <property type="entry name" value="CYTOCHROME B"/>
    <property type="match status" value="1"/>
</dbReference>
<dbReference type="Pfam" id="PF00032">
    <property type="entry name" value="Cytochrom_B_C"/>
    <property type="match status" value="1"/>
</dbReference>
<dbReference type="Pfam" id="PF00033">
    <property type="entry name" value="Cytochrome_B"/>
    <property type="match status" value="1"/>
</dbReference>
<dbReference type="PIRSF" id="PIRSF038885">
    <property type="entry name" value="COB"/>
    <property type="match status" value="1"/>
</dbReference>
<dbReference type="SUPFAM" id="SSF81648">
    <property type="entry name" value="a domain/subunit of cytochrome bc1 complex (Ubiquinol-cytochrome c reductase)"/>
    <property type="match status" value="1"/>
</dbReference>
<dbReference type="SUPFAM" id="SSF81342">
    <property type="entry name" value="Transmembrane di-heme cytochromes"/>
    <property type="match status" value="1"/>
</dbReference>
<dbReference type="PROSITE" id="PS51003">
    <property type="entry name" value="CYTB_CTER"/>
    <property type="match status" value="1"/>
</dbReference>
<dbReference type="PROSITE" id="PS51002">
    <property type="entry name" value="CYTB_NTER"/>
    <property type="match status" value="1"/>
</dbReference>
<name>CYB_PELMG</name>
<comment type="function">
    <text evidence="2">Component of the ubiquinol-cytochrome c reductase complex (complex III or cytochrome b-c1 complex) that is part of the mitochondrial respiratory chain. The b-c1 complex mediates electron transfer from ubiquinol to cytochrome c. Contributes to the generation of a proton gradient across the mitochondrial membrane that is then used for ATP synthesis.</text>
</comment>
<comment type="cofactor">
    <cofactor evidence="2">
        <name>heme b</name>
        <dbReference type="ChEBI" id="CHEBI:60344"/>
    </cofactor>
    <text evidence="2">Binds 2 heme b groups non-covalently.</text>
</comment>
<comment type="subunit">
    <text evidence="2">The cytochrome bc1 complex contains 11 subunits: 3 respiratory subunits (MT-CYB, CYC1 and UQCRFS1), 2 core proteins (UQCRC1 and UQCRC2) and 6 low-molecular weight proteins (UQCRH/QCR6, UQCRB/QCR7, UQCRQ/QCR8, UQCR10/QCR9, UQCR11/QCR10 and a cleavage product of UQCRFS1). This cytochrome bc1 complex then forms a dimer.</text>
</comment>
<comment type="subcellular location">
    <subcellularLocation>
        <location evidence="2">Mitochondrion inner membrane</location>
        <topology evidence="2">Multi-pass membrane protein</topology>
    </subcellularLocation>
</comment>
<comment type="miscellaneous">
    <text evidence="1">Heme 1 (or BL or b562) is low-potential and absorbs at about 562 nm, and heme 2 (or BH or b566) is high-potential and absorbs at about 566 nm.</text>
</comment>
<comment type="similarity">
    <text evidence="3 4">Belongs to the cytochrome b family.</text>
</comment>
<comment type="caution">
    <text evidence="2">The full-length protein contains only eight transmembrane helices, not nine as predicted by bioinformatics tools.</text>
</comment>
<gene>
    <name type="primary">MT-CYB</name>
    <name type="synonym">COB</name>
    <name type="synonym">CYTB</name>
    <name type="synonym">MTCYB</name>
</gene>
<evidence type="ECO:0000250" key="1"/>
<evidence type="ECO:0000250" key="2">
    <source>
        <dbReference type="UniProtKB" id="P00157"/>
    </source>
</evidence>
<evidence type="ECO:0000255" key="3">
    <source>
        <dbReference type="PROSITE-ProRule" id="PRU00967"/>
    </source>
</evidence>
<evidence type="ECO:0000255" key="4">
    <source>
        <dbReference type="PROSITE-ProRule" id="PRU00968"/>
    </source>
</evidence>
<accession>O79220</accession>
<geneLocation type="mitochondrion"/>
<protein>
    <recommendedName>
        <fullName>Cytochrome b</fullName>
    </recommendedName>
    <alternativeName>
        <fullName>Complex III subunit 3</fullName>
    </alternativeName>
    <alternativeName>
        <fullName>Complex III subunit III</fullName>
    </alternativeName>
    <alternativeName>
        <fullName>Cytochrome b-c1 complex subunit 3</fullName>
    </alternativeName>
    <alternativeName>
        <fullName>Ubiquinol-cytochrome-c reductase complex cytochrome b subunit</fullName>
    </alternativeName>
</protein>
<reference key="1">
    <citation type="journal article" date="1998" name="Mol. Biol. Evol.">
        <title>Body size effects and rates of cytochrome-b evolution in tube-nosed seabirds.</title>
        <authorList>
            <person name="Nunn G.B."/>
            <person name="Stanley S.E."/>
        </authorList>
    </citation>
    <scope>NUCLEOTIDE SEQUENCE [GENOMIC DNA]</scope>
    <source>
        <strain>Isolate MDP-1</strain>
    </source>
</reference>
<feature type="chain" id="PRO_0000061368" description="Cytochrome b">
    <location>
        <begin position="1"/>
        <end position="380"/>
    </location>
</feature>
<feature type="transmembrane region" description="Helical" evidence="2">
    <location>
        <begin position="34"/>
        <end position="54"/>
    </location>
</feature>
<feature type="transmembrane region" description="Helical" evidence="2">
    <location>
        <begin position="78"/>
        <end position="99"/>
    </location>
</feature>
<feature type="transmembrane region" description="Helical" evidence="2">
    <location>
        <begin position="114"/>
        <end position="134"/>
    </location>
</feature>
<feature type="transmembrane region" description="Helical" evidence="2">
    <location>
        <begin position="179"/>
        <end position="199"/>
    </location>
</feature>
<feature type="transmembrane region" description="Helical" evidence="2">
    <location>
        <begin position="227"/>
        <end position="247"/>
    </location>
</feature>
<feature type="transmembrane region" description="Helical" evidence="2">
    <location>
        <begin position="289"/>
        <end position="309"/>
    </location>
</feature>
<feature type="transmembrane region" description="Helical" evidence="2">
    <location>
        <begin position="321"/>
        <end position="341"/>
    </location>
</feature>
<feature type="transmembrane region" description="Helical" evidence="2">
    <location>
        <begin position="348"/>
        <end position="368"/>
    </location>
</feature>
<feature type="binding site" description="axial binding residue" evidence="2">
    <location>
        <position position="84"/>
    </location>
    <ligand>
        <name>heme b</name>
        <dbReference type="ChEBI" id="CHEBI:60344"/>
        <label>b562</label>
    </ligand>
    <ligandPart>
        <name>Fe</name>
        <dbReference type="ChEBI" id="CHEBI:18248"/>
    </ligandPart>
</feature>
<feature type="binding site" description="axial binding residue" evidence="2">
    <location>
        <position position="98"/>
    </location>
    <ligand>
        <name>heme b</name>
        <dbReference type="ChEBI" id="CHEBI:60344"/>
        <label>b566</label>
    </ligand>
    <ligandPart>
        <name>Fe</name>
        <dbReference type="ChEBI" id="CHEBI:18248"/>
    </ligandPart>
</feature>
<feature type="binding site" description="axial binding residue" evidence="2">
    <location>
        <position position="183"/>
    </location>
    <ligand>
        <name>heme b</name>
        <dbReference type="ChEBI" id="CHEBI:60344"/>
        <label>b562</label>
    </ligand>
    <ligandPart>
        <name>Fe</name>
        <dbReference type="ChEBI" id="CHEBI:18248"/>
    </ligandPart>
</feature>
<feature type="binding site" description="axial binding residue" evidence="2">
    <location>
        <position position="197"/>
    </location>
    <ligand>
        <name>heme b</name>
        <dbReference type="ChEBI" id="CHEBI:60344"/>
        <label>b566</label>
    </ligand>
    <ligandPart>
        <name>Fe</name>
        <dbReference type="ChEBI" id="CHEBI:18248"/>
    </ligandPart>
</feature>
<feature type="binding site" evidence="2">
    <location>
        <position position="202"/>
    </location>
    <ligand>
        <name>a ubiquinone</name>
        <dbReference type="ChEBI" id="CHEBI:16389"/>
    </ligand>
</feature>
<proteinExistence type="inferred from homology"/>